<evidence type="ECO:0000269" key="1">
    <source>
    </source>
</evidence>
<evidence type="ECO:0000305" key="2"/>
<sequence length="279" mass="32094">MQGTFKRFYHPTLTRMSFLDKFLKPMMATASPKEYQIKQLVKPIGLTQAPRKSTKYSQGNSLRDMFDSEKTNHRVKELAVEFSKSGLYDVQVFQKTKGKLFIAPVSYWKEDKALFFPHLIGTAMDGTKQQNIEDMLRGKTSIVRLFSTASGDKLSSSYFQGIVDDNKKTDYLTEADARLSLNDSNVQIIEVNLVENAVKSALVKTLARWANRVPSWRQPFYFECSRGQWPFSVREELFCNNVFSGYVFLVDQQLKIRWAACGEATPSEKEALWKFAKRL</sequence>
<organism>
    <name type="scientific">Saccharomyces cerevisiae (strain ATCC 204508 / S288c)</name>
    <name type="common">Baker's yeast</name>
    <dbReference type="NCBI Taxonomy" id="559292"/>
    <lineage>
        <taxon>Eukaryota</taxon>
        <taxon>Fungi</taxon>
        <taxon>Dikarya</taxon>
        <taxon>Ascomycota</taxon>
        <taxon>Saccharomycotina</taxon>
        <taxon>Saccharomycetes</taxon>
        <taxon>Saccharomycetales</taxon>
        <taxon>Saccharomycetaceae</taxon>
        <taxon>Saccharomyces</taxon>
    </lineage>
</organism>
<feature type="chain" id="PRO_0000071727" description="Mitochondrial ATPase complex subunit ATP10">
    <location>
        <begin position="1"/>
        <end position="279"/>
    </location>
</feature>
<feature type="sequence conflict" description="In Ref. 2; AAB05633." evidence="2" ref="2">
    <original>C</original>
    <variation>Y</variation>
    <location>
        <position position="224"/>
    </location>
</feature>
<gene>
    <name type="primary">ATP10</name>
    <name type="ordered locus">YLR393W</name>
    <name type="ORF">L8084.8</name>
</gene>
<comment type="function">
    <text>Essential for the assembly of the mitochondrial F1-F0 complex.</text>
</comment>
<comment type="subcellular location">
    <subcellularLocation>
        <location>Mitochondrion inner membrane</location>
    </subcellularLocation>
</comment>
<comment type="miscellaneous">
    <text>Mutations in ATP10 induce a loss of rutamycin sensitivity of mitochondrial ATPase.</text>
</comment>
<comment type="miscellaneous">
    <text evidence="1">Present with 1890 molecules/cell in log phase SD medium.</text>
</comment>
<comment type="similarity">
    <text evidence="2">Belongs to the ATP10 family.</text>
</comment>
<comment type="sequence caution" evidence="2">
    <conflict type="erroneous initiation">
        <sequence resource="EMBL-CDS" id="AAB05633"/>
    </conflict>
</comment>
<proteinExistence type="evidence at protein level"/>
<name>ATP10_YEAST</name>
<dbReference type="EMBL" id="J05463">
    <property type="protein sequence ID" value="AAB05633.1"/>
    <property type="status" value="ALT_INIT"/>
    <property type="molecule type" value="Genomic_DNA"/>
</dbReference>
<dbReference type="EMBL" id="U19729">
    <property type="protein sequence ID" value="AAB82347.1"/>
    <property type="molecule type" value="Genomic_DNA"/>
</dbReference>
<dbReference type="EMBL" id="AY558229">
    <property type="protein sequence ID" value="AAS56555.1"/>
    <property type="molecule type" value="Genomic_DNA"/>
</dbReference>
<dbReference type="EMBL" id="BK006945">
    <property type="protein sequence ID" value="DAA09694.1"/>
    <property type="molecule type" value="Genomic_DNA"/>
</dbReference>
<dbReference type="PIR" id="S55949">
    <property type="entry name" value="S55949"/>
</dbReference>
<dbReference type="RefSeq" id="NP_013497.1">
    <property type="nucleotide sequence ID" value="NM_001182281.1"/>
</dbReference>
<dbReference type="BioGRID" id="31652">
    <property type="interactions" value="388"/>
</dbReference>
<dbReference type="DIP" id="DIP-4641N"/>
<dbReference type="FunCoup" id="P18496">
    <property type="interactions" value="218"/>
</dbReference>
<dbReference type="IntAct" id="P18496">
    <property type="interactions" value="2"/>
</dbReference>
<dbReference type="STRING" id="4932.YLR393W"/>
<dbReference type="GlyGen" id="P18496">
    <property type="glycosylation" value="1 site"/>
</dbReference>
<dbReference type="PaxDb" id="4932-YLR393W"/>
<dbReference type="PeptideAtlas" id="P18496"/>
<dbReference type="EnsemblFungi" id="YLR393W_mRNA">
    <property type="protein sequence ID" value="YLR393W"/>
    <property type="gene ID" value="YLR393W"/>
</dbReference>
<dbReference type="GeneID" id="851109"/>
<dbReference type="KEGG" id="sce:YLR393W"/>
<dbReference type="AGR" id="SGD:S000004385"/>
<dbReference type="SGD" id="S000004385">
    <property type="gene designation" value="ATP10"/>
</dbReference>
<dbReference type="VEuPathDB" id="FungiDB:YLR393W"/>
<dbReference type="eggNOG" id="KOG4614">
    <property type="taxonomic scope" value="Eukaryota"/>
</dbReference>
<dbReference type="HOGENOM" id="CLU_047290_2_0_1"/>
<dbReference type="InParanoid" id="P18496"/>
<dbReference type="OMA" id="YFPNFHG"/>
<dbReference type="OrthoDB" id="17089at2759"/>
<dbReference type="BioCyc" id="YEAST:G3O-32458-MONOMER"/>
<dbReference type="BioGRID-ORCS" id="851109">
    <property type="hits" value="9 hits in 10 CRISPR screens"/>
</dbReference>
<dbReference type="PRO" id="PR:P18496"/>
<dbReference type="Proteomes" id="UP000002311">
    <property type="component" value="Chromosome XII"/>
</dbReference>
<dbReference type="RNAct" id="P18496">
    <property type="molecule type" value="protein"/>
</dbReference>
<dbReference type="GO" id="GO:0005737">
    <property type="term" value="C:cytoplasm"/>
    <property type="evidence" value="ECO:0007005"/>
    <property type="project" value="SGD"/>
</dbReference>
<dbReference type="GO" id="GO:0005743">
    <property type="term" value="C:mitochondrial inner membrane"/>
    <property type="evidence" value="ECO:0000353"/>
    <property type="project" value="SGD"/>
</dbReference>
<dbReference type="GO" id="GO:0031966">
    <property type="term" value="C:mitochondrial membrane"/>
    <property type="evidence" value="ECO:0000314"/>
    <property type="project" value="SGD"/>
</dbReference>
<dbReference type="GO" id="GO:0005739">
    <property type="term" value="C:mitochondrion"/>
    <property type="evidence" value="ECO:0007005"/>
    <property type="project" value="SGD"/>
</dbReference>
<dbReference type="GO" id="GO:0051082">
    <property type="term" value="F:unfolded protein binding"/>
    <property type="evidence" value="ECO:0000353"/>
    <property type="project" value="SGD"/>
</dbReference>
<dbReference type="GO" id="GO:0033615">
    <property type="term" value="P:mitochondrial proton-transporting ATP synthase complex assembly"/>
    <property type="evidence" value="ECO:0000315"/>
    <property type="project" value="SGD"/>
</dbReference>
<dbReference type="InterPro" id="IPR007849">
    <property type="entry name" value="ATP10"/>
</dbReference>
<dbReference type="PANTHER" id="PTHR28106">
    <property type="entry name" value="MITOCHONDRIAL ATPASE COMPLEX SUBUNIT ATP10"/>
    <property type="match status" value="1"/>
</dbReference>
<dbReference type="PANTHER" id="PTHR28106:SF1">
    <property type="entry name" value="MITOCHONDRIAL ATPASE COMPLEX SUBUNIT ATP10"/>
    <property type="match status" value="1"/>
</dbReference>
<dbReference type="Pfam" id="PF05176">
    <property type="entry name" value="ATP-synt_10"/>
    <property type="match status" value="1"/>
</dbReference>
<accession>P18496</accession>
<accession>D6VZ28</accession>
<accession>Q06020</accession>
<keyword id="KW-0472">Membrane</keyword>
<keyword id="KW-0496">Mitochondrion</keyword>
<keyword id="KW-0999">Mitochondrion inner membrane</keyword>
<keyword id="KW-1185">Reference proteome</keyword>
<protein>
    <recommendedName>
        <fullName>Mitochondrial ATPase complex subunit ATP10</fullName>
    </recommendedName>
</protein>
<reference key="1">
    <citation type="journal article" date="1990" name="J. Biol. Chem.">
        <title>ATP 10, a yeast nuclear gene required for the assembly of the mitochondrial F1-F0 complex.</title>
        <authorList>
            <person name="Ackerman S.H."/>
            <person name="Tzagoloff A."/>
        </authorList>
    </citation>
    <scope>NUCLEOTIDE SEQUENCE [GENOMIC DNA]</scope>
</reference>
<reference key="2">
    <citation type="journal article" date="1997" name="Nature">
        <title>The nucleotide sequence of Saccharomyces cerevisiae chromosome XII.</title>
        <authorList>
            <person name="Johnston M."/>
            <person name="Hillier L.W."/>
            <person name="Riles L."/>
            <person name="Albermann K."/>
            <person name="Andre B."/>
            <person name="Ansorge W."/>
            <person name="Benes V."/>
            <person name="Brueckner M."/>
            <person name="Delius H."/>
            <person name="Dubois E."/>
            <person name="Duesterhoeft A."/>
            <person name="Entian K.-D."/>
            <person name="Floeth M."/>
            <person name="Goffeau A."/>
            <person name="Hebling U."/>
            <person name="Heumann K."/>
            <person name="Heuss-Neitzel D."/>
            <person name="Hilbert H."/>
            <person name="Hilger F."/>
            <person name="Kleine K."/>
            <person name="Koetter P."/>
            <person name="Louis E.J."/>
            <person name="Messenguy F."/>
            <person name="Mewes H.-W."/>
            <person name="Miosga T."/>
            <person name="Moestl D."/>
            <person name="Mueller-Auer S."/>
            <person name="Nentwich U."/>
            <person name="Obermaier B."/>
            <person name="Piravandi E."/>
            <person name="Pohl T.M."/>
            <person name="Portetelle D."/>
            <person name="Purnelle B."/>
            <person name="Rechmann S."/>
            <person name="Rieger M."/>
            <person name="Rinke M."/>
            <person name="Rose M."/>
            <person name="Scharfe M."/>
            <person name="Scherens B."/>
            <person name="Scholler P."/>
            <person name="Schwager C."/>
            <person name="Schwarz S."/>
            <person name="Underwood A.P."/>
            <person name="Urrestarazu L.A."/>
            <person name="Vandenbol M."/>
            <person name="Verhasselt P."/>
            <person name="Vierendeels F."/>
            <person name="Voet M."/>
            <person name="Volckaert G."/>
            <person name="Voss H."/>
            <person name="Wambutt R."/>
            <person name="Wedler E."/>
            <person name="Wedler H."/>
            <person name="Zimmermann F.K."/>
            <person name="Zollner A."/>
            <person name="Hani J."/>
            <person name="Hoheisel J.D."/>
        </authorList>
    </citation>
    <scope>NUCLEOTIDE SEQUENCE [LARGE SCALE GENOMIC DNA]</scope>
    <source>
        <strain>ATCC 204508 / S288c</strain>
    </source>
</reference>
<reference key="3">
    <citation type="journal article" date="2014" name="G3 (Bethesda)">
        <title>The reference genome sequence of Saccharomyces cerevisiae: Then and now.</title>
        <authorList>
            <person name="Engel S.R."/>
            <person name="Dietrich F.S."/>
            <person name="Fisk D.G."/>
            <person name="Binkley G."/>
            <person name="Balakrishnan R."/>
            <person name="Costanzo M.C."/>
            <person name="Dwight S.S."/>
            <person name="Hitz B.C."/>
            <person name="Karra K."/>
            <person name="Nash R.S."/>
            <person name="Weng S."/>
            <person name="Wong E.D."/>
            <person name="Lloyd P."/>
            <person name="Skrzypek M.S."/>
            <person name="Miyasato S.R."/>
            <person name="Simison M."/>
            <person name="Cherry J.M."/>
        </authorList>
    </citation>
    <scope>GENOME REANNOTATION</scope>
    <source>
        <strain>ATCC 204508 / S288c</strain>
    </source>
</reference>
<reference key="4">
    <citation type="journal article" date="2007" name="Genome Res.">
        <title>Approaching a complete repository of sequence-verified protein-encoding clones for Saccharomyces cerevisiae.</title>
        <authorList>
            <person name="Hu Y."/>
            <person name="Rolfs A."/>
            <person name="Bhullar B."/>
            <person name="Murthy T.V.S."/>
            <person name="Zhu C."/>
            <person name="Berger M.F."/>
            <person name="Camargo A.A."/>
            <person name="Kelley F."/>
            <person name="McCarron S."/>
            <person name="Jepson D."/>
            <person name="Richardson A."/>
            <person name="Raphael J."/>
            <person name="Moreira D."/>
            <person name="Taycher E."/>
            <person name="Zuo D."/>
            <person name="Mohr S."/>
            <person name="Kane M.F."/>
            <person name="Williamson J."/>
            <person name="Simpson A.J.G."/>
            <person name="Bulyk M.L."/>
            <person name="Harlow E."/>
            <person name="Marsischky G."/>
            <person name="Kolodner R.D."/>
            <person name="LaBaer J."/>
        </authorList>
    </citation>
    <scope>NUCLEOTIDE SEQUENCE [GENOMIC DNA]</scope>
    <source>
        <strain>ATCC 204508 / S288c</strain>
    </source>
</reference>
<reference key="5">
    <citation type="journal article" date="2003" name="Nature">
        <title>Global analysis of protein expression in yeast.</title>
        <authorList>
            <person name="Ghaemmaghami S."/>
            <person name="Huh W.-K."/>
            <person name="Bower K."/>
            <person name="Howson R.W."/>
            <person name="Belle A."/>
            <person name="Dephoure N."/>
            <person name="O'Shea E.K."/>
            <person name="Weissman J.S."/>
        </authorList>
    </citation>
    <scope>LEVEL OF PROTEIN EXPRESSION [LARGE SCALE ANALYSIS]</scope>
</reference>